<geneLocation type="chloroplast"/>
<sequence length="475" mass="52764">MSPKTETKASVGFKAGVKDYRLTYYTPEYQTKDTDILAAFRVTPQPGVPPEEAGAAVAAESSTGTWTTVWTDGLTSLDRYKGRCYDIEPVPGEESQFIAYVAYPLDLFEEGSVTNLFTSIVGNVFGFKALRALRLEDLRIPPAYSKTFQGPPHGIQVERDKLNKYGRPLLGCTIKPKLGLSAKNYGRAVYECLRGGLDFTKDDENVNSQPFMRWRDRFCFCAEALYKAQAETGEIKGHYLNATAGTCEEMMKRAVFARELGVPIVMHDYLTGGFTANTSLAHYCRDNGLLLHIHRAMHAVIDRQRNHGMHFRVLAKALRMSGGDHIHAGTVVGKLEGEREVTLGFVDLLRDDFIEKDRSRGIYFTQDWVSMPGVLPVASGGIHVWHMPALTEIFGDDSVLQFGGGTLGHPWGNAPGAVANRVALEACVQARNEGRDLAREGNQVIREATKWSPELAAACEVWKEIKFEFDTIDRL</sequence>
<protein>
    <recommendedName>
        <fullName evidence="1">Ribulose bisphosphate carboxylase large chain</fullName>
        <shortName evidence="1">RuBisCO large subunit</shortName>
        <ecNumber evidence="1">4.1.1.39</ecNumber>
    </recommendedName>
</protein>
<feature type="propeptide" id="PRO_0000340658" evidence="1">
    <location>
        <begin position="1"/>
        <end position="2"/>
    </location>
</feature>
<feature type="chain" id="PRO_0000062428" description="Ribulose bisphosphate carboxylase large chain">
    <location>
        <begin position="3"/>
        <end position="475"/>
    </location>
</feature>
<feature type="active site" description="Proton acceptor" evidence="1">
    <location>
        <position position="175"/>
    </location>
</feature>
<feature type="active site" description="Proton acceptor" evidence="1">
    <location>
        <position position="294"/>
    </location>
</feature>
<feature type="binding site" description="in homodimeric partner" evidence="1">
    <location>
        <position position="123"/>
    </location>
    <ligand>
        <name>substrate</name>
    </ligand>
</feature>
<feature type="binding site" evidence="1">
    <location>
        <position position="173"/>
    </location>
    <ligand>
        <name>substrate</name>
    </ligand>
</feature>
<feature type="binding site" evidence="1">
    <location>
        <position position="177"/>
    </location>
    <ligand>
        <name>substrate</name>
    </ligand>
</feature>
<feature type="binding site" description="via carbamate group" evidence="1">
    <location>
        <position position="201"/>
    </location>
    <ligand>
        <name>Mg(2+)</name>
        <dbReference type="ChEBI" id="CHEBI:18420"/>
    </ligand>
</feature>
<feature type="binding site" evidence="1">
    <location>
        <position position="203"/>
    </location>
    <ligand>
        <name>Mg(2+)</name>
        <dbReference type="ChEBI" id="CHEBI:18420"/>
    </ligand>
</feature>
<feature type="binding site" evidence="1">
    <location>
        <position position="204"/>
    </location>
    <ligand>
        <name>Mg(2+)</name>
        <dbReference type="ChEBI" id="CHEBI:18420"/>
    </ligand>
</feature>
<feature type="binding site" evidence="1">
    <location>
        <position position="295"/>
    </location>
    <ligand>
        <name>substrate</name>
    </ligand>
</feature>
<feature type="binding site" evidence="1">
    <location>
        <position position="327"/>
    </location>
    <ligand>
        <name>substrate</name>
    </ligand>
</feature>
<feature type="binding site" evidence="1">
    <location>
        <position position="379"/>
    </location>
    <ligand>
        <name>substrate</name>
    </ligand>
</feature>
<feature type="site" description="Transition state stabilizer" evidence="1">
    <location>
        <position position="334"/>
    </location>
</feature>
<feature type="modified residue" description="N-acetylproline" evidence="1">
    <location>
        <position position="3"/>
    </location>
</feature>
<feature type="modified residue" description="N6,N6,N6-trimethyllysine" evidence="1">
    <location>
        <position position="14"/>
    </location>
</feature>
<feature type="modified residue" description="N6-carboxylysine" evidence="1">
    <location>
        <position position="201"/>
    </location>
</feature>
<feature type="disulfide bond" description="Interchain; in linked form" evidence="1">
    <location>
        <position position="247"/>
    </location>
</feature>
<feature type="sequence conflict" description="In Ref. 2; AAA84142." evidence="2" ref="2">
    <location>
        <position position="56"/>
    </location>
</feature>
<keyword id="KW-0007">Acetylation</keyword>
<keyword id="KW-0113">Calvin cycle</keyword>
<keyword id="KW-0120">Carbon dioxide fixation</keyword>
<keyword id="KW-0150">Chloroplast</keyword>
<keyword id="KW-1015">Disulfide bond</keyword>
<keyword id="KW-0456">Lyase</keyword>
<keyword id="KW-0460">Magnesium</keyword>
<keyword id="KW-0479">Metal-binding</keyword>
<keyword id="KW-0488">Methylation</keyword>
<keyword id="KW-0503">Monooxygenase</keyword>
<keyword id="KW-0560">Oxidoreductase</keyword>
<keyword id="KW-0601">Photorespiration</keyword>
<keyword id="KW-0602">Photosynthesis</keyword>
<keyword id="KW-0934">Plastid</keyword>
<dbReference type="EC" id="4.1.1.39" evidence="1"/>
<dbReference type="EMBL" id="AP009377">
    <property type="protein sequence ID" value="BAG16662.1"/>
    <property type="molecule type" value="Genomic_DNA"/>
</dbReference>
<dbReference type="EMBL" id="L25751">
    <property type="protein sequence ID" value="AAA84142.2"/>
    <property type="molecule type" value="Genomic_DNA"/>
</dbReference>
<dbReference type="RefSeq" id="YP_001806664.1">
    <property type="nucleotide sequence ID" value="NC_010548.1"/>
</dbReference>
<dbReference type="SMR" id="P48696"/>
<dbReference type="GeneID" id="6166559"/>
<dbReference type="KEGG" id="cjf:6166559"/>
<dbReference type="OrthoDB" id="563909at2759"/>
<dbReference type="GO" id="GO:0009507">
    <property type="term" value="C:chloroplast"/>
    <property type="evidence" value="ECO:0007669"/>
    <property type="project" value="UniProtKB-SubCell"/>
</dbReference>
<dbReference type="GO" id="GO:0000287">
    <property type="term" value="F:magnesium ion binding"/>
    <property type="evidence" value="ECO:0007669"/>
    <property type="project" value="UniProtKB-UniRule"/>
</dbReference>
<dbReference type="GO" id="GO:0004497">
    <property type="term" value="F:monooxygenase activity"/>
    <property type="evidence" value="ECO:0007669"/>
    <property type="project" value="UniProtKB-KW"/>
</dbReference>
<dbReference type="GO" id="GO:0016984">
    <property type="term" value="F:ribulose-bisphosphate carboxylase activity"/>
    <property type="evidence" value="ECO:0007669"/>
    <property type="project" value="UniProtKB-UniRule"/>
</dbReference>
<dbReference type="GO" id="GO:0009853">
    <property type="term" value="P:photorespiration"/>
    <property type="evidence" value="ECO:0007669"/>
    <property type="project" value="UniProtKB-KW"/>
</dbReference>
<dbReference type="GO" id="GO:0019253">
    <property type="term" value="P:reductive pentose-phosphate cycle"/>
    <property type="evidence" value="ECO:0007669"/>
    <property type="project" value="UniProtKB-UniRule"/>
</dbReference>
<dbReference type="CDD" id="cd08212">
    <property type="entry name" value="RuBisCO_large_I"/>
    <property type="match status" value="1"/>
</dbReference>
<dbReference type="FunFam" id="3.20.20.110:FF:000001">
    <property type="entry name" value="Ribulose bisphosphate carboxylase large chain"/>
    <property type="match status" value="1"/>
</dbReference>
<dbReference type="FunFam" id="3.30.70.150:FF:000001">
    <property type="entry name" value="Ribulose bisphosphate carboxylase large chain"/>
    <property type="match status" value="1"/>
</dbReference>
<dbReference type="Gene3D" id="3.20.20.110">
    <property type="entry name" value="Ribulose bisphosphate carboxylase, large subunit, C-terminal domain"/>
    <property type="match status" value="1"/>
</dbReference>
<dbReference type="Gene3D" id="3.30.70.150">
    <property type="entry name" value="RuBisCO large subunit, N-terminal domain"/>
    <property type="match status" value="1"/>
</dbReference>
<dbReference type="HAMAP" id="MF_01338">
    <property type="entry name" value="RuBisCO_L_type1"/>
    <property type="match status" value="1"/>
</dbReference>
<dbReference type="InterPro" id="IPR033966">
    <property type="entry name" value="RuBisCO"/>
</dbReference>
<dbReference type="InterPro" id="IPR020878">
    <property type="entry name" value="RuBisCo_large_chain_AS"/>
</dbReference>
<dbReference type="InterPro" id="IPR000685">
    <property type="entry name" value="RuBisCO_lsu_C"/>
</dbReference>
<dbReference type="InterPro" id="IPR036376">
    <property type="entry name" value="RuBisCO_lsu_C_sf"/>
</dbReference>
<dbReference type="InterPro" id="IPR017443">
    <property type="entry name" value="RuBisCO_lsu_fd_N"/>
</dbReference>
<dbReference type="InterPro" id="IPR036422">
    <property type="entry name" value="RuBisCO_lsu_N_sf"/>
</dbReference>
<dbReference type="InterPro" id="IPR020888">
    <property type="entry name" value="RuBisCO_lsuI"/>
</dbReference>
<dbReference type="NCBIfam" id="NF003252">
    <property type="entry name" value="PRK04208.1"/>
    <property type="match status" value="1"/>
</dbReference>
<dbReference type="PANTHER" id="PTHR42704">
    <property type="entry name" value="RIBULOSE BISPHOSPHATE CARBOXYLASE"/>
    <property type="match status" value="1"/>
</dbReference>
<dbReference type="PANTHER" id="PTHR42704:SF15">
    <property type="entry name" value="RIBULOSE BISPHOSPHATE CARBOXYLASE LARGE CHAIN"/>
    <property type="match status" value="1"/>
</dbReference>
<dbReference type="Pfam" id="PF00016">
    <property type="entry name" value="RuBisCO_large"/>
    <property type="match status" value="1"/>
</dbReference>
<dbReference type="Pfam" id="PF02788">
    <property type="entry name" value="RuBisCO_large_N"/>
    <property type="match status" value="1"/>
</dbReference>
<dbReference type="SFLD" id="SFLDG01052">
    <property type="entry name" value="RuBisCO"/>
    <property type="match status" value="1"/>
</dbReference>
<dbReference type="SFLD" id="SFLDS00014">
    <property type="entry name" value="RuBisCO"/>
    <property type="match status" value="1"/>
</dbReference>
<dbReference type="SFLD" id="SFLDG00301">
    <property type="entry name" value="RuBisCO-like_proteins"/>
    <property type="match status" value="1"/>
</dbReference>
<dbReference type="SUPFAM" id="SSF51649">
    <property type="entry name" value="RuBisCo, C-terminal domain"/>
    <property type="match status" value="1"/>
</dbReference>
<dbReference type="SUPFAM" id="SSF54966">
    <property type="entry name" value="RuBisCO, large subunit, small (N-terminal) domain"/>
    <property type="match status" value="1"/>
</dbReference>
<dbReference type="PROSITE" id="PS00157">
    <property type="entry name" value="RUBISCO_LARGE"/>
    <property type="match status" value="1"/>
</dbReference>
<name>RBL_CRYJA</name>
<organism>
    <name type="scientific">Cryptomeria japonica</name>
    <name type="common">Japanese cedar</name>
    <name type="synonym">Cupressus japonica</name>
    <dbReference type="NCBI Taxonomy" id="3369"/>
    <lineage>
        <taxon>Eukaryota</taxon>
        <taxon>Viridiplantae</taxon>
        <taxon>Streptophyta</taxon>
        <taxon>Embryophyta</taxon>
        <taxon>Tracheophyta</taxon>
        <taxon>Spermatophyta</taxon>
        <taxon>Pinopsida</taxon>
        <taxon>Pinidae</taxon>
        <taxon>Conifers II</taxon>
        <taxon>Cupressales</taxon>
        <taxon>Cupressaceae</taxon>
        <taxon>Cryptomeria</taxon>
    </lineage>
</organism>
<accession>P48696</accession>
<accession>B1VKF1</accession>
<reference key="1">
    <citation type="journal article" date="2008" name="BMC Plant Biol.">
        <title>Complete nucleotide sequence of the Cryptomeria japonica D. Don. chloroplast genome and comparative chloroplast genomics: diversified genomic structure of coniferous species.</title>
        <authorList>
            <person name="Hirao T."/>
            <person name="Watanabe A."/>
            <person name="Kurita M."/>
            <person name="Kondo T."/>
            <person name="Takata K."/>
        </authorList>
    </citation>
    <scope>NUCLEOTIDE SEQUENCE [LARGE SCALE GENOMIC DNA]</scope>
</reference>
<reference key="2">
    <citation type="journal article" date="1994" name="Syst. Bot.">
        <title>Phylogenetic relationships among genera of the conifer families Taxodiaceae and Cupressaceae: evidence from rbcL sequences.</title>
        <authorList>
            <person name="Brunsfeld S.J."/>
            <person name="Soltis P.S."/>
            <person name="Soltis D.E."/>
            <person name="Gadek P.A."/>
            <person name="Quinn C.J."/>
            <person name="Strenge D.D."/>
            <person name="Ranker T.A."/>
        </authorList>
        <dbReference type="AGRICOLA" id="IND20410577"/>
    </citation>
    <scope>NUCLEOTIDE SEQUENCE [GENOMIC DNA]</scope>
</reference>
<gene>
    <name evidence="1" type="primary">rbcL</name>
</gene>
<comment type="function">
    <text evidence="1">RuBisCO catalyzes two reactions: the carboxylation of D-ribulose 1,5-bisphosphate, the primary event in carbon dioxide fixation, as well as the oxidative fragmentation of the pentose substrate in the photorespiration process. Both reactions occur simultaneously and in competition at the same active site.</text>
</comment>
<comment type="catalytic activity">
    <reaction evidence="1">
        <text>2 (2R)-3-phosphoglycerate + 2 H(+) = D-ribulose 1,5-bisphosphate + CO2 + H2O</text>
        <dbReference type="Rhea" id="RHEA:23124"/>
        <dbReference type="ChEBI" id="CHEBI:15377"/>
        <dbReference type="ChEBI" id="CHEBI:15378"/>
        <dbReference type="ChEBI" id="CHEBI:16526"/>
        <dbReference type="ChEBI" id="CHEBI:57870"/>
        <dbReference type="ChEBI" id="CHEBI:58272"/>
        <dbReference type="EC" id="4.1.1.39"/>
    </reaction>
</comment>
<comment type="catalytic activity">
    <reaction evidence="1">
        <text>D-ribulose 1,5-bisphosphate + O2 = 2-phosphoglycolate + (2R)-3-phosphoglycerate + 2 H(+)</text>
        <dbReference type="Rhea" id="RHEA:36631"/>
        <dbReference type="ChEBI" id="CHEBI:15378"/>
        <dbReference type="ChEBI" id="CHEBI:15379"/>
        <dbReference type="ChEBI" id="CHEBI:57870"/>
        <dbReference type="ChEBI" id="CHEBI:58033"/>
        <dbReference type="ChEBI" id="CHEBI:58272"/>
    </reaction>
</comment>
<comment type="cofactor">
    <cofactor evidence="1">
        <name>Mg(2+)</name>
        <dbReference type="ChEBI" id="CHEBI:18420"/>
    </cofactor>
    <text evidence="1">Binds 1 Mg(2+) ion per subunit.</text>
</comment>
<comment type="subunit">
    <text evidence="1">Heterohexadecamer of 8 large chains and 8 small chains; disulfide-linked. The disulfide link is formed within the large subunit homodimers.</text>
</comment>
<comment type="subcellular location">
    <subcellularLocation>
        <location>Plastid</location>
        <location>Chloroplast</location>
    </subcellularLocation>
</comment>
<comment type="PTM">
    <text evidence="1">The disulfide bond which can form in the large chain dimeric partners within the hexadecamer appears to be associated with oxidative stress and protein turnover.</text>
</comment>
<comment type="miscellaneous">
    <text evidence="1">The basic functional RuBisCO is composed of a large chain homodimer in a 'head-to-tail' conformation. In form I RuBisCO this homodimer is arranged in a barrel-like tetramer with the small subunits forming a tetrameric 'cap' on each end of the 'barrel'.</text>
</comment>
<comment type="similarity">
    <text evidence="1">Belongs to the RuBisCO large chain family. Type I subfamily.</text>
</comment>
<evidence type="ECO:0000255" key="1">
    <source>
        <dbReference type="HAMAP-Rule" id="MF_01338"/>
    </source>
</evidence>
<evidence type="ECO:0000305" key="2"/>
<proteinExistence type="inferred from homology"/>